<dbReference type="EMBL" id="AC003974">
    <property type="protein sequence ID" value="AAC04496.1"/>
    <property type="status" value="ALT_INIT"/>
    <property type="molecule type" value="Genomic_DNA"/>
</dbReference>
<dbReference type="EMBL" id="CP002685">
    <property type="protein sequence ID" value="AEC08714.1"/>
    <property type="molecule type" value="Genomic_DNA"/>
</dbReference>
<dbReference type="EMBL" id="AK118318">
    <property type="protein sequence ID" value="BAC42934.1"/>
    <property type="molecule type" value="mRNA"/>
</dbReference>
<dbReference type="EMBL" id="BT006042">
    <property type="protein sequence ID" value="AAP06822.1"/>
    <property type="molecule type" value="mRNA"/>
</dbReference>
<dbReference type="PIR" id="T00801">
    <property type="entry name" value="T00801"/>
</dbReference>
<dbReference type="RefSeq" id="NP_180826.2">
    <property type="nucleotide sequence ID" value="NM_128826.4"/>
</dbReference>
<dbReference type="SMR" id="O48850"/>
<dbReference type="BioGRID" id="3174">
    <property type="interactions" value="1"/>
</dbReference>
<dbReference type="FunCoup" id="O48850">
    <property type="interactions" value="1"/>
</dbReference>
<dbReference type="STRING" id="3702.O48850"/>
<dbReference type="PaxDb" id="3702-AT2G32670.1"/>
<dbReference type="ProteomicsDB" id="243255"/>
<dbReference type="EnsemblPlants" id="AT2G32670.1">
    <property type="protein sequence ID" value="AT2G32670.1"/>
    <property type="gene ID" value="AT2G32670"/>
</dbReference>
<dbReference type="GeneID" id="817827"/>
<dbReference type="Gramene" id="AT2G32670.1">
    <property type="protein sequence ID" value="AT2G32670.1"/>
    <property type="gene ID" value="AT2G32670"/>
</dbReference>
<dbReference type="KEGG" id="ath:AT2G32670"/>
<dbReference type="Araport" id="AT2G32670"/>
<dbReference type="TAIR" id="AT2G32670">
    <property type="gene designation" value="VAMP725"/>
</dbReference>
<dbReference type="eggNOG" id="KOG0859">
    <property type="taxonomic scope" value="Eukaryota"/>
</dbReference>
<dbReference type="HOGENOM" id="CLU_064620_1_0_1"/>
<dbReference type="InParanoid" id="O48850"/>
<dbReference type="OMA" id="HEDKADS"/>
<dbReference type="PhylomeDB" id="O48850"/>
<dbReference type="PRO" id="PR:O48850"/>
<dbReference type="Proteomes" id="UP000006548">
    <property type="component" value="Chromosome 2"/>
</dbReference>
<dbReference type="ExpressionAtlas" id="O48850">
    <property type="expression patterns" value="baseline and differential"/>
</dbReference>
<dbReference type="GO" id="GO:0031901">
    <property type="term" value="C:early endosome membrane"/>
    <property type="evidence" value="ECO:0007669"/>
    <property type="project" value="UniProtKB-SubCell"/>
</dbReference>
<dbReference type="GO" id="GO:0005768">
    <property type="term" value="C:endosome"/>
    <property type="evidence" value="ECO:0000304"/>
    <property type="project" value="TAIR"/>
</dbReference>
<dbReference type="GO" id="GO:0005886">
    <property type="term" value="C:plasma membrane"/>
    <property type="evidence" value="ECO:0000304"/>
    <property type="project" value="TAIR"/>
</dbReference>
<dbReference type="GO" id="GO:0015031">
    <property type="term" value="P:protein transport"/>
    <property type="evidence" value="ECO:0007669"/>
    <property type="project" value="UniProtKB-KW"/>
</dbReference>
<dbReference type="GO" id="GO:0016192">
    <property type="term" value="P:vesicle-mediated transport"/>
    <property type="evidence" value="ECO:0007669"/>
    <property type="project" value="InterPro"/>
</dbReference>
<dbReference type="CDD" id="cd14824">
    <property type="entry name" value="Longin"/>
    <property type="match status" value="1"/>
</dbReference>
<dbReference type="CDD" id="cd15843">
    <property type="entry name" value="R-SNARE"/>
    <property type="match status" value="1"/>
</dbReference>
<dbReference type="FunFam" id="3.30.450.50:FF:000002">
    <property type="entry name" value="Vesicle-associated membrane protein 722"/>
    <property type="match status" value="1"/>
</dbReference>
<dbReference type="FunFam" id="1.20.5.110:FF:000010">
    <property type="entry name" value="Vesicle-associated membrane protein 726"/>
    <property type="match status" value="1"/>
</dbReference>
<dbReference type="Gene3D" id="1.20.5.110">
    <property type="match status" value="1"/>
</dbReference>
<dbReference type="Gene3D" id="3.30.450.50">
    <property type="entry name" value="Longin domain"/>
    <property type="match status" value="1"/>
</dbReference>
<dbReference type="InterPro" id="IPR011012">
    <property type="entry name" value="Longin-like_dom_sf"/>
</dbReference>
<dbReference type="InterPro" id="IPR010908">
    <property type="entry name" value="Longin_dom"/>
</dbReference>
<dbReference type="InterPro" id="IPR001388">
    <property type="entry name" value="Synaptobrevin-like"/>
</dbReference>
<dbReference type="InterPro" id="IPR051097">
    <property type="entry name" value="Synaptobrevin-like_transport"/>
</dbReference>
<dbReference type="InterPro" id="IPR042855">
    <property type="entry name" value="V_SNARE_CC"/>
</dbReference>
<dbReference type="PANTHER" id="PTHR21136">
    <property type="entry name" value="SNARE PROTEINS"/>
    <property type="match status" value="1"/>
</dbReference>
<dbReference type="PANTHER" id="PTHR21136:SF192">
    <property type="entry name" value="VESICLE-ASSOCIATED MEMBRANE PROTEIN 725-RELATED"/>
    <property type="match status" value="1"/>
</dbReference>
<dbReference type="Pfam" id="PF13774">
    <property type="entry name" value="Longin"/>
    <property type="match status" value="1"/>
</dbReference>
<dbReference type="Pfam" id="PF00957">
    <property type="entry name" value="Synaptobrevin"/>
    <property type="match status" value="1"/>
</dbReference>
<dbReference type="PRINTS" id="PR00219">
    <property type="entry name" value="SYNAPTOBREVN"/>
</dbReference>
<dbReference type="SMART" id="SM01270">
    <property type="entry name" value="Longin"/>
    <property type="match status" value="1"/>
</dbReference>
<dbReference type="SUPFAM" id="SSF58038">
    <property type="entry name" value="SNARE fusion complex"/>
    <property type="match status" value="1"/>
</dbReference>
<dbReference type="SUPFAM" id="SSF64356">
    <property type="entry name" value="SNARE-like"/>
    <property type="match status" value="1"/>
</dbReference>
<dbReference type="PROSITE" id="PS50859">
    <property type="entry name" value="LONGIN"/>
    <property type="match status" value="1"/>
</dbReference>
<dbReference type="PROSITE" id="PS00417">
    <property type="entry name" value="SYNAPTOBREVIN"/>
    <property type="match status" value="1"/>
</dbReference>
<dbReference type="PROSITE" id="PS50892">
    <property type="entry name" value="V_SNARE"/>
    <property type="match status" value="1"/>
</dbReference>
<name>VA725_ARATH</name>
<protein>
    <recommendedName>
        <fullName evidence="6">Vesicle-associated membrane protein 725</fullName>
        <shortName evidence="6">AtVAMP725</shortName>
    </recommendedName>
</protein>
<accession>O48850</accession>
<accession>Q8GXC1</accession>
<proteinExistence type="evidence at transcript level"/>
<reference key="1">
    <citation type="journal article" date="1999" name="Nature">
        <title>Sequence and analysis of chromosome 2 of the plant Arabidopsis thaliana.</title>
        <authorList>
            <person name="Lin X."/>
            <person name="Kaul S."/>
            <person name="Rounsley S.D."/>
            <person name="Shea T.P."/>
            <person name="Benito M.-I."/>
            <person name="Town C.D."/>
            <person name="Fujii C.Y."/>
            <person name="Mason T.M."/>
            <person name="Bowman C.L."/>
            <person name="Barnstead M.E."/>
            <person name="Feldblyum T.V."/>
            <person name="Buell C.R."/>
            <person name="Ketchum K.A."/>
            <person name="Lee J.J."/>
            <person name="Ronning C.M."/>
            <person name="Koo H.L."/>
            <person name="Moffat K.S."/>
            <person name="Cronin L.A."/>
            <person name="Shen M."/>
            <person name="Pai G."/>
            <person name="Van Aken S."/>
            <person name="Umayam L."/>
            <person name="Tallon L.J."/>
            <person name="Gill J.E."/>
            <person name="Adams M.D."/>
            <person name="Carrera A.J."/>
            <person name="Creasy T.H."/>
            <person name="Goodman H.M."/>
            <person name="Somerville C.R."/>
            <person name="Copenhaver G.P."/>
            <person name="Preuss D."/>
            <person name="Nierman W.C."/>
            <person name="White O."/>
            <person name="Eisen J.A."/>
            <person name="Salzberg S.L."/>
            <person name="Fraser C.M."/>
            <person name="Venter J.C."/>
        </authorList>
    </citation>
    <scope>NUCLEOTIDE SEQUENCE [LARGE SCALE GENOMIC DNA]</scope>
    <source>
        <strain>cv. Columbia</strain>
    </source>
</reference>
<reference key="2">
    <citation type="journal article" date="2017" name="Plant J.">
        <title>Araport11: a complete reannotation of the Arabidopsis thaliana reference genome.</title>
        <authorList>
            <person name="Cheng C.Y."/>
            <person name="Krishnakumar V."/>
            <person name="Chan A.P."/>
            <person name="Thibaud-Nissen F."/>
            <person name="Schobel S."/>
            <person name="Town C.D."/>
        </authorList>
    </citation>
    <scope>GENOME REANNOTATION</scope>
    <source>
        <strain>cv. Columbia</strain>
    </source>
</reference>
<reference key="3">
    <citation type="journal article" date="2002" name="Science">
        <title>Functional annotation of a full-length Arabidopsis cDNA collection.</title>
        <authorList>
            <person name="Seki M."/>
            <person name="Narusaka M."/>
            <person name="Kamiya A."/>
            <person name="Ishida J."/>
            <person name="Satou M."/>
            <person name="Sakurai T."/>
            <person name="Nakajima M."/>
            <person name="Enju A."/>
            <person name="Akiyama K."/>
            <person name="Oono Y."/>
            <person name="Muramatsu M."/>
            <person name="Hayashizaki Y."/>
            <person name="Kawai J."/>
            <person name="Carninci P."/>
            <person name="Itoh M."/>
            <person name="Ishii Y."/>
            <person name="Arakawa T."/>
            <person name="Shibata K."/>
            <person name="Shinagawa A."/>
            <person name="Shinozaki K."/>
        </authorList>
    </citation>
    <scope>NUCLEOTIDE SEQUENCE [LARGE SCALE MRNA]</scope>
    <source>
        <strain>cv. Columbia</strain>
    </source>
</reference>
<reference key="4">
    <citation type="journal article" date="2003" name="Science">
        <title>Empirical analysis of transcriptional activity in the Arabidopsis genome.</title>
        <authorList>
            <person name="Yamada K."/>
            <person name="Lim J."/>
            <person name="Dale J.M."/>
            <person name="Chen H."/>
            <person name="Shinn P."/>
            <person name="Palm C.J."/>
            <person name="Southwick A.M."/>
            <person name="Wu H.C."/>
            <person name="Kim C.J."/>
            <person name="Nguyen M."/>
            <person name="Pham P.K."/>
            <person name="Cheuk R.F."/>
            <person name="Karlin-Newmann G."/>
            <person name="Liu S.X."/>
            <person name="Lam B."/>
            <person name="Sakano H."/>
            <person name="Wu T."/>
            <person name="Yu G."/>
            <person name="Miranda M."/>
            <person name="Quach H.L."/>
            <person name="Tripp M."/>
            <person name="Chang C.H."/>
            <person name="Lee J.M."/>
            <person name="Toriumi M.J."/>
            <person name="Chan M.M."/>
            <person name="Tang C.C."/>
            <person name="Onodera C.S."/>
            <person name="Deng J.M."/>
            <person name="Akiyama K."/>
            <person name="Ansari Y."/>
            <person name="Arakawa T."/>
            <person name="Banh J."/>
            <person name="Banno F."/>
            <person name="Bowser L."/>
            <person name="Brooks S.Y."/>
            <person name="Carninci P."/>
            <person name="Chao Q."/>
            <person name="Choy N."/>
            <person name="Enju A."/>
            <person name="Goldsmith A.D."/>
            <person name="Gurjal M."/>
            <person name="Hansen N.F."/>
            <person name="Hayashizaki Y."/>
            <person name="Johnson-Hopson C."/>
            <person name="Hsuan V.W."/>
            <person name="Iida K."/>
            <person name="Karnes M."/>
            <person name="Khan S."/>
            <person name="Koesema E."/>
            <person name="Ishida J."/>
            <person name="Jiang P.X."/>
            <person name="Jones T."/>
            <person name="Kawai J."/>
            <person name="Kamiya A."/>
            <person name="Meyers C."/>
            <person name="Nakajima M."/>
            <person name="Narusaka M."/>
            <person name="Seki M."/>
            <person name="Sakurai T."/>
            <person name="Satou M."/>
            <person name="Tamse R."/>
            <person name="Vaysberg M."/>
            <person name="Wallender E.K."/>
            <person name="Wong C."/>
            <person name="Yamamura Y."/>
            <person name="Yuan S."/>
            <person name="Shinozaki K."/>
            <person name="Davis R.W."/>
            <person name="Theologis A."/>
            <person name="Ecker J.R."/>
        </authorList>
    </citation>
    <scope>NUCLEOTIDE SEQUENCE [LARGE SCALE MRNA]</scope>
    <source>
        <strain>cv. Columbia</strain>
    </source>
</reference>
<reference key="5">
    <citation type="journal article" date="2000" name="Plant Physiol.">
        <title>The Arabidopsis genome. An abundance of soluble N-ethylmaleimide-sensitive factor adaptor protein receptors.</title>
        <authorList>
            <person name="Sanderfoot A.A."/>
            <person name="Assaad F.F."/>
            <person name="Raikhel N.V."/>
        </authorList>
    </citation>
    <scope>GENE FAMILY</scope>
    <scope>NOMENCLATURE</scope>
</reference>
<reference key="6">
    <citation type="journal article" date="2004" name="Cell Struct. Funct.">
        <title>Systematic analysis of SNARE molecules in Arabidopsis: dissection of the post-Golgi network in plant cells.</title>
        <authorList>
            <person name="Uemura T."/>
            <person name="Ueda T."/>
            <person name="Ohniwa R.L."/>
            <person name="Nakano A."/>
            <person name="Takeyasu K."/>
            <person name="Sato M.H."/>
        </authorList>
    </citation>
    <scope>TISSUE SPECIFICITY</scope>
    <scope>SUBCELLULAR LOCATION</scope>
</reference>
<reference key="7">
    <citation type="journal article" date="2009" name="BMC Genomics">
        <title>Comparative analysis of plant genomes allows the definition of the 'Phytolongins': a novel non-SNARE longin domain protein family.</title>
        <authorList>
            <person name="Vedovato M."/>
            <person name="Rossi V."/>
            <person name="Dacks J.B."/>
            <person name="Filippini F."/>
        </authorList>
    </citation>
    <scope>3D-STRUCTURE MODELING</scope>
</reference>
<organism>
    <name type="scientific">Arabidopsis thaliana</name>
    <name type="common">Mouse-ear cress</name>
    <dbReference type="NCBI Taxonomy" id="3702"/>
    <lineage>
        <taxon>Eukaryota</taxon>
        <taxon>Viridiplantae</taxon>
        <taxon>Streptophyta</taxon>
        <taxon>Embryophyta</taxon>
        <taxon>Tracheophyta</taxon>
        <taxon>Spermatophyta</taxon>
        <taxon>Magnoliopsida</taxon>
        <taxon>eudicotyledons</taxon>
        <taxon>Gunneridae</taxon>
        <taxon>Pentapetalae</taxon>
        <taxon>rosids</taxon>
        <taxon>malvids</taxon>
        <taxon>Brassicales</taxon>
        <taxon>Brassicaceae</taxon>
        <taxon>Camelineae</taxon>
        <taxon>Arabidopsis</taxon>
    </lineage>
</organism>
<gene>
    <name evidence="6" type="primary">VAMP725</name>
    <name evidence="9" type="ordered locus">At2g32670</name>
    <name evidence="10" type="ORF">F24L7.19</name>
</gene>
<keyword id="KW-1003">Cell membrane</keyword>
<keyword id="KW-0175">Coiled coil</keyword>
<keyword id="KW-0967">Endosome</keyword>
<keyword id="KW-0472">Membrane</keyword>
<keyword id="KW-0653">Protein transport</keyword>
<keyword id="KW-1185">Reference proteome</keyword>
<keyword id="KW-0812">Transmembrane</keyword>
<keyword id="KW-1133">Transmembrane helix</keyword>
<keyword id="KW-0813">Transport</keyword>
<sequence>MDRSVVPISLAPFQFLLVFWIFLTSVHTNPNKQQKTVVSLSLWWNSKNRIRGCVWFFFLLRVTRTMGQQNLIYSFVARGTVILVEYTEFKGNFTAVAAQCLQKLPSSNNKFTYNCDGHTFNYLVENGFTYCVVAVESVGRQIPMAFLERVKEDFNKRYGGGKATTAQANSLNREFGSKLKEHMQYCVDHPDEISKLAKVKAQVTEVKGVMMENIEKVLDRGEKIELLVDKTENLRSQAQDFRTQGTKIRRKMWFENMKIKLIVLGIIITLILIIILSVCGGFKCT</sequence>
<comment type="function">
    <text evidence="8">Involved in the targeting and/or fusion of transport vesicles to their target membrane.</text>
</comment>
<comment type="subcellular location">
    <subcellularLocation>
        <location evidence="5">Cell membrane</location>
        <topology evidence="1">Single-pass type IV membrane protein</topology>
    </subcellularLocation>
    <subcellularLocation>
        <location evidence="5">Early endosome membrane</location>
        <topology evidence="1">Single-pass type IV membrane protein</topology>
    </subcellularLocation>
</comment>
<comment type="tissue specificity">
    <text evidence="5">Expressed in flowers, leaves, stems and roots.</text>
</comment>
<comment type="similarity">
    <text evidence="7">Belongs to the synaptobrevin family.</text>
</comment>
<comment type="sequence caution" evidence="7">
    <conflict type="erroneous initiation">
        <sequence resource="EMBL-CDS" id="AAC04496"/>
    </conflict>
</comment>
<evidence type="ECO:0000250" key="1">
    <source>
        <dbReference type="UniProtKB" id="Q12255"/>
    </source>
</evidence>
<evidence type="ECO:0000255" key="2"/>
<evidence type="ECO:0000255" key="3">
    <source>
        <dbReference type="PROSITE-ProRule" id="PRU00231"/>
    </source>
</evidence>
<evidence type="ECO:0000255" key="4">
    <source>
        <dbReference type="PROSITE-ProRule" id="PRU00290"/>
    </source>
</evidence>
<evidence type="ECO:0000269" key="5">
    <source>
    </source>
</evidence>
<evidence type="ECO:0000303" key="6">
    <source>
    </source>
</evidence>
<evidence type="ECO:0000305" key="7"/>
<evidence type="ECO:0000305" key="8">
    <source>
    </source>
</evidence>
<evidence type="ECO:0000312" key="9">
    <source>
        <dbReference type="Araport" id="AT2G32670"/>
    </source>
</evidence>
<evidence type="ECO:0000312" key="10">
    <source>
        <dbReference type="EMBL" id="AAC04496.1"/>
    </source>
</evidence>
<feature type="chain" id="PRO_0000206758" description="Vesicle-associated membrane protein 725">
    <location>
        <begin position="1"/>
        <end position="285"/>
    </location>
</feature>
<feature type="topological domain" description="Cytoplasmic" evidence="2">
    <location>
        <begin position="1"/>
        <end position="261"/>
    </location>
</feature>
<feature type="transmembrane region" description="Helical; Anchor for type IV membrane protein" evidence="2">
    <location>
        <begin position="262"/>
        <end position="282"/>
    </location>
</feature>
<feature type="topological domain" description="Vesicular" evidence="2">
    <location>
        <begin position="283"/>
        <end position="285"/>
    </location>
</feature>
<feature type="domain" description="Longin" evidence="3">
    <location>
        <begin position="75"/>
        <end position="179"/>
    </location>
</feature>
<feature type="domain" description="v-SNARE coiled-coil homology" evidence="4">
    <location>
        <begin position="195"/>
        <end position="255"/>
    </location>
</feature>